<evidence type="ECO:0000250" key="1">
    <source>
        <dbReference type="UniProtKB" id="Q8K2H6"/>
    </source>
</evidence>
<evidence type="ECO:0000255" key="2">
    <source>
        <dbReference type="PROSITE-ProRule" id="PRU00614"/>
    </source>
</evidence>
<evidence type="ECO:0000269" key="3">
    <source>
    </source>
</evidence>
<evidence type="ECO:0000269" key="4">
    <source>
    </source>
</evidence>
<evidence type="ECO:0000269" key="5">
    <source>
    </source>
</evidence>
<evidence type="ECO:0000269" key="6">
    <source>
    </source>
</evidence>
<evidence type="ECO:0000269" key="7">
    <source>
    </source>
</evidence>
<evidence type="ECO:0000269" key="8">
    <source>
    </source>
</evidence>
<evidence type="ECO:0000269" key="9">
    <source ref="4"/>
</evidence>
<evidence type="ECO:0000305" key="10"/>
<evidence type="ECO:0007744" key="11">
    <source>
        <dbReference type="PDB" id="4UI9"/>
    </source>
</evidence>
<evidence type="ECO:0007744" key="12">
    <source>
        <dbReference type="PDB" id="5A31"/>
    </source>
</evidence>
<evidence type="ECO:0007744" key="13">
    <source>
    </source>
</evidence>
<evidence type="ECO:0007829" key="14">
    <source>
        <dbReference type="PDB" id="1JHJ"/>
    </source>
</evidence>
<evidence type="ECO:0007829" key="15">
    <source>
        <dbReference type="PDB" id="5G05"/>
    </source>
</evidence>
<evidence type="ECO:0007829" key="16">
    <source>
        <dbReference type="PDB" id="6Q6G"/>
    </source>
</evidence>
<evidence type="ECO:0007829" key="17">
    <source>
        <dbReference type="PDB" id="8TAU"/>
    </source>
</evidence>
<evidence type="ECO:0007829" key="18">
    <source>
        <dbReference type="PDB" id="9GAW"/>
    </source>
</evidence>
<proteinExistence type="evidence at protein level"/>
<name>APC10_HUMAN</name>
<accession>Q9UM13</accession>
<accession>D3DNZ7</accession>
<accession>Q2V500</accession>
<accession>Q9UG51</accession>
<accession>Q9Y5R0</accession>
<reference key="1">
    <citation type="journal article" date="1999" name="J. Biol. Chem.">
        <title>Characterization of the DOC1/APC10 subunit of the yeast and the human anaphase-promoting complex.</title>
        <authorList>
            <person name="Grossberger R."/>
            <person name="Gieffers C."/>
            <person name="Zachariae W."/>
            <person name="Podtelejnikov A.V."/>
            <person name="Schleiffer A."/>
            <person name="Nasmyth K."/>
            <person name="Mann M."/>
            <person name="Peters J.-M."/>
        </authorList>
    </citation>
    <scope>NUCLEOTIDE SEQUENCE [MRNA]</scope>
</reference>
<reference key="2">
    <citation type="journal article" date="1999" name="Oncogene">
        <title>Identification of human APC10/Doc1 as a subunit of anaphase promoting complex.</title>
        <authorList>
            <person name="Kurasawa Y."/>
            <person name="Todokoro K."/>
        </authorList>
    </citation>
    <scope>NUCLEOTIDE SEQUENCE [MRNA]</scope>
</reference>
<reference key="3">
    <citation type="journal article" date="2001" name="Genome Res.">
        <title>Towards a catalog of human genes and proteins: sequencing and analysis of 500 novel complete protein coding human cDNAs.</title>
        <authorList>
            <person name="Wiemann S."/>
            <person name="Weil B."/>
            <person name="Wellenreuther R."/>
            <person name="Gassenhuber J."/>
            <person name="Glassl S."/>
            <person name="Ansorge W."/>
            <person name="Boecher M."/>
            <person name="Bloecker H."/>
            <person name="Bauersachs S."/>
            <person name="Blum H."/>
            <person name="Lauber J."/>
            <person name="Duesterhoeft A."/>
            <person name="Beyer A."/>
            <person name="Koehrer K."/>
            <person name="Strack N."/>
            <person name="Mewes H.-W."/>
            <person name="Ottenwaelder B."/>
            <person name="Obermaier B."/>
            <person name="Tampe J."/>
            <person name="Heubner D."/>
            <person name="Wambutt R."/>
            <person name="Korn B."/>
            <person name="Klein M."/>
            <person name="Poustka A."/>
        </authorList>
    </citation>
    <scope>NUCLEOTIDE SEQUENCE [LARGE SCALE MRNA]</scope>
    <source>
        <tissue>Brain</tissue>
    </source>
</reference>
<reference key="4">
    <citation type="submission" date="2005-11" db="EMBL/GenBank/DDBJ databases">
        <authorList>
            <consortium name="NIEHS SNPs program"/>
        </authorList>
    </citation>
    <scope>NUCLEOTIDE SEQUENCE [GENOMIC DNA]</scope>
    <scope>VARIANT GLN-46</scope>
</reference>
<reference key="5">
    <citation type="submission" date="2005-09" db="EMBL/GenBank/DDBJ databases">
        <authorList>
            <person name="Mural R.J."/>
            <person name="Istrail S."/>
            <person name="Sutton G.G."/>
            <person name="Florea L."/>
            <person name="Halpern A.L."/>
            <person name="Mobarry C.M."/>
            <person name="Lippert R."/>
            <person name="Walenz B."/>
            <person name="Shatkay H."/>
            <person name="Dew I."/>
            <person name="Miller J.R."/>
            <person name="Flanigan M.J."/>
            <person name="Edwards N.J."/>
            <person name="Bolanos R."/>
            <person name="Fasulo D."/>
            <person name="Halldorsson B.V."/>
            <person name="Hannenhalli S."/>
            <person name="Turner R."/>
            <person name="Yooseph S."/>
            <person name="Lu F."/>
            <person name="Nusskern D.R."/>
            <person name="Shue B.C."/>
            <person name="Zheng X.H."/>
            <person name="Zhong F."/>
            <person name="Delcher A.L."/>
            <person name="Huson D.H."/>
            <person name="Kravitz S.A."/>
            <person name="Mouchard L."/>
            <person name="Reinert K."/>
            <person name="Remington K.A."/>
            <person name="Clark A.G."/>
            <person name="Waterman M.S."/>
            <person name="Eichler E.E."/>
            <person name="Adams M.D."/>
            <person name="Hunkapiller M.W."/>
            <person name="Myers E.W."/>
            <person name="Venter J.C."/>
        </authorList>
    </citation>
    <scope>NUCLEOTIDE SEQUENCE [LARGE SCALE GENOMIC DNA]</scope>
</reference>
<reference key="6">
    <citation type="journal article" date="2004" name="Genome Res.">
        <title>The status, quality, and expansion of the NIH full-length cDNA project: the Mammalian Gene Collection (MGC).</title>
        <authorList>
            <consortium name="The MGC Project Team"/>
        </authorList>
    </citation>
    <scope>NUCLEOTIDE SEQUENCE [LARGE SCALE MRNA]</scope>
    <source>
        <tissue>Brain</tissue>
    </source>
</reference>
<reference key="7">
    <citation type="journal article" date="2008" name="Cell">
        <title>Mechanism of ubiquitin-chain formation by the human anaphase-promoting complex.</title>
        <authorList>
            <person name="Jin L."/>
            <person name="Williamson A."/>
            <person name="Banerjee S."/>
            <person name="Philipp I."/>
            <person name="Rape M."/>
        </authorList>
    </citation>
    <scope>FUNCTION OF THE APC/C</scope>
</reference>
<reference key="8">
    <citation type="journal article" date="2012" name="Proc. Natl. Acad. Sci. U.S.A.">
        <title>N-terminal acetylome analyses and functional insights of the N-terminal acetyltransferase NatB.</title>
        <authorList>
            <person name="Van Damme P."/>
            <person name="Lasa M."/>
            <person name="Polevoda B."/>
            <person name="Gazquez C."/>
            <person name="Elosegui-Artola A."/>
            <person name="Kim D.S."/>
            <person name="De Juan-Pardo E."/>
            <person name="Demeyer K."/>
            <person name="Hole K."/>
            <person name="Larrea E."/>
            <person name="Timmerman E."/>
            <person name="Prieto J."/>
            <person name="Arnesen T."/>
            <person name="Sherman F."/>
            <person name="Gevaert K."/>
            <person name="Aldabe R."/>
        </authorList>
    </citation>
    <scope>ACETYLATION [LARGE SCALE ANALYSIS] AT THR-2</scope>
    <scope>CLEAVAGE OF INITIATOR METHIONINE [LARGE SCALE ANALYSIS]</scope>
    <scope>IDENTIFICATION BY MASS SPECTROMETRY [LARGE SCALE ANALYSIS]</scope>
</reference>
<reference key="9">
    <citation type="journal article" date="2013" name="J. Proteome Res.">
        <title>Toward a comprehensive characterization of a human cancer cell phosphoproteome.</title>
        <authorList>
            <person name="Zhou H."/>
            <person name="Di Palma S."/>
            <person name="Preisinger C."/>
            <person name="Peng M."/>
            <person name="Polat A.N."/>
            <person name="Heck A.J."/>
            <person name="Mohammed S."/>
        </authorList>
    </citation>
    <scope>IDENTIFICATION BY MASS SPECTROMETRY [LARGE SCALE ANALYSIS]</scope>
    <source>
        <tissue>Erythroleukemia</tissue>
    </source>
</reference>
<reference key="10">
    <citation type="journal article" date="2017" name="Cell">
        <title>Assembly and function of heterotypic ubiquitin chains in cell-cycle and protein quality control.</title>
        <authorList>
            <person name="Yau R.G."/>
            <person name="Doerner K."/>
            <person name="Castellanos E.R."/>
            <person name="Haakonsen D.L."/>
            <person name="Werner A."/>
            <person name="Wang N."/>
            <person name="Yang X.W."/>
            <person name="Martinez-Martin N."/>
            <person name="Matsumoto M.L."/>
            <person name="Dixit V.M."/>
            <person name="Rape M."/>
        </authorList>
    </citation>
    <scope>FUNCTION</scope>
    <scope>PATHWAY</scope>
</reference>
<reference key="11">
    <citation type="journal article" date="2001" name="Nat. Struct. Biol.">
        <title>Crystal structure of the APC10/DOC1 subunit of the human anaphase-promoting complex.</title>
        <authorList>
            <person name="Wendt K.S."/>
            <person name="Vodermaier H.C."/>
            <person name="Jacob U."/>
            <person name="Gieffers C."/>
            <person name="Gmachl M."/>
            <person name="Peters J.-M."/>
            <person name="Huber R."/>
            <person name="Sondermann P."/>
        </authorList>
    </citation>
    <scope>X-RAY CRYSTALLOGRAPHY (1.6 ANGSTROMS)</scope>
    <scope>INTERACTION WITH CDC27</scope>
</reference>
<reference key="12">
    <citation type="journal article" date="2005" name="Mol. Cell">
        <title>Localization of the coactivator Cdh1 and the cullin subunit Apc2 in a cryo-electron microscopy model of vertebrate APC/C.</title>
        <authorList>
            <person name="Dube P."/>
            <person name="Herzog F."/>
            <person name="Gieffers C."/>
            <person name="Sander B."/>
            <person name="Riedel D."/>
            <person name="Mueller S.A."/>
            <person name="Engel A."/>
            <person name="Peters J.-M."/>
            <person name="Stark H."/>
        </authorList>
    </citation>
    <scope>ELECTRON MICROSCOPY OF THE APC/C</scope>
</reference>
<reference key="13">
    <citation type="journal article" date="2014" name="Nature">
        <title>Molecular architecture and mechanism of the anaphase-promoting complex.</title>
        <authorList>
            <person name="Chang L."/>
            <person name="Zhang Z."/>
            <person name="Yang J."/>
            <person name="McLaughlin S.H."/>
            <person name="Barford D."/>
        </authorList>
    </citation>
    <scope>STRUCTURE BY ELECTRON MICROSCOPY (7.4 ANGSTROMS) OF THE APC/C</scope>
    <scope>SUBUNIT</scope>
</reference>
<reference evidence="11 12" key="14">
    <citation type="journal article" date="2015" name="Nature">
        <title>Atomic structure of the APC/C and its mechanism of protein ubiquitination.</title>
        <authorList>
            <person name="Chang L."/>
            <person name="Zhang Z."/>
            <person name="Yang J."/>
            <person name="McLaughlin S.H."/>
            <person name="Barford D."/>
        </authorList>
    </citation>
    <scope>STRUCTURE BY ELECTRON MICROSCOPY (3.60 ANGSTROMS) OF 2-185 OF APC/C</scope>
    <scope>SUBUNIT</scope>
</reference>
<reference key="15">
    <citation type="journal article" date="2022" name="Clin. Genet.">
        <title>A homozygous loss-of-function mutation in FBXO43 causes human non-obstructive azoospermia.</title>
        <authorList>
            <person name="Wu H."/>
            <person name="Zhang X."/>
            <person name="Shen Q."/>
            <person name="Liu Y."/>
            <person name="Gao Y."/>
            <person name="Wang G."/>
            <person name="Lv M."/>
            <person name="Hua R."/>
            <person name="Xu Y."/>
            <person name="Zhou P."/>
            <person name="Wei Z."/>
            <person name="Tao F."/>
            <person name="He X."/>
            <person name="Cao Y."/>
            <person name="Liu M."/>
        </authorList>
    </citation>
    <scope>INTERACTION WITH FBXO43</scope>
</reference>
<keyword id="KW-0002">3D-structure</keyword>
<keyword id="KW-0007">Acetylation</keyword>
<keyword id="KW-0131">Cell cycle</keyword>
<keyword id="KW-0132">Cell division</keyword>
<keyword id="KW-0498">Mitosis</keyword>
<keyword id="KW-1267">Proteomics identification</keyword>
<keyword id="KW-1185">Reference proteome</keyword>
<keyword id="KW-0833">Ubl conjugation pathway</keyword>
<organism>
    <name type="scientific">Homo sapiens</name>
    <name type="common">Human</name>
    <dbReference type="NCBI Taxonomy" id="9606"/>
    <lineage>
        <taxon>Eukaryota</taxon>
        <taxon>Metazoa</taxon>
        <taxon>Chordata</taxon>
        <taxon>Craniata</taxon>
        <taxon>Vertebrata</taxon>
        <taxon>Euteleostomi</taxon>
        <taxon>Mammalia</taxon>
        <taxon>Eutheria</taxon>
        <taxon>Euarchontoglires</taxon>
        <taxon>Primates</taxon>
        <taxon>Haplorrhini</taxon>
        <taxon>Catarrhini</taxon>
        <taxon>Hominidae</taxon>
        <taxon>Homo</taxon>
    </lineage>
</organism>
<sequence>MTTPNKTPPGADPKQLERTGTVREIGSQAVWSLSSCKPGFGVDQLRDDNLETYWQSDGSQPHLVNIQFRRKTTVKTLCIYADYKSDESYTPSKISVRVGNNFHNLQEIRQLELVEPSGWIHVPLTDNHKKPTRTFMIQIAVLANHQNGRDTHMRQIKIYTPVEESSIGKFPRCTTIDFMMYRSIR</sequence>
<protein>
    <recommendedName>
        <fullName>Anaphase-promoting complex subunit 10</fullName>
        <shortName>APC10</shortName>
    </recommendedName>
    <alternativeName>
        <fullName>Cyclosome subunit 10</fullName>
    </alternativeName>
</protein>
<comment type="function">
    <text evidence="4 7">Component of the anaphase promoting complex/cyclosome (APC/C), a cell cycle-regulated E3 ubiquitin ligase that controls progression through mitosis and the G1 phase of the cell cycle (PubMed:18485873). The APC/C complex acts by mediating ubiquitination and subsequent degradation of target proteins: it mainly mediates the formation of 'Lys-11'-linked polyubiquitin chains and, to a lower extent, the formation of 'Lys-48'- and 'Lys-63'-linked polyubiquitin chains (PubMed:18485873). The APC/C complex catalyzes assembly of branched 'Lys-11'-/'Lys-48'-linked branched ubiquitin chains on target proteins (PubMed:29033132).</text>
</comment>
<comment type="pathway">
    <text evidence="4 7">Protein modification; protein ubiquitination.</text>
</comment>
<comment type="subunit">
    <text evidence="1 3 5 6 8">The mammalian APC/C is composed at least of 14 distinct subunits ANAPC1, ANAPC2, CDC27/APC3, ANAPC4, ANAPC5, CDC16/APC6, ANAPC7, CDC23/APC8, ANAPC10, ANAPC11, CDC26/APC12, ANAPC13, ANAPC15 and ANAPC16 that assemble into a complex of at least 19 chains with a combined molecular mass of around 1.2 MDa; APC/C interacts with FZR1 and FBXO5 (PubMed:25043029, PubMed:26083744). The C-terminus of APC10 binds to CDC27/APC3 (PubMed:11524682). Interacts with PIWIL1; interaction only takes place when PIWIL1 binds piRNA (By similarity). Interacts with FBXO43; the interaction is direct.</text>
</comment>
<comment type="similarity">
    <text evidence="10">Belongs to the APC10 family.</text>
</comment>
<gene>
    <name type="primary">ANAPC10</name>
    <name type="synonym">APC10</name>
</gene>
<feature type="initiator methionine" description="Removed" evidence="13">
    <location>
        <position position="1"/>
    </location>
</feature>
<feature type="chain" id="PRO_0000174011" description="Anaphase-promoting complex subunit 10">
    <location>
        <begin position="2"/>
        <end position="185"/>
    </location>
</feature>
<feature type="domain" description="DOC" evidence="2">
    <location>
        <begin position="2"/>
        <end position="185"/>
    </location>
</feature>
<feature type="modified residue" description="N-acetylthreonine" evidence="13">
    <location>
        <position position="2"/>
    </location>
</feature>
<feature type="modified residue" description="N6-acetyllysine" evidence="1">
    <location>
        <position position="169"/>
    </location>
</feature>
<feature type="sequence variant" id="VAR_025200" description="In dbSNP:rs35257136." evidence="9">
    <original>R</original>
    <variation>Q</variation>
    <location>
        <position position="46"/>
    </location>
</feature>
<feature type="sequence conflict" description="In Ref. 1; AAD30527." evidence="10" ref="1">
    <original>K</original>
    <variation>R</variation>
    <location>
        <position position="6"/>
    </location>
</feature>
<feature type="sequence conflict" description="In Ref. 3; CAB45705." evidence="10" ref="3">
    <original>T</original>
    <variation>S</variation>
    <location>
        <position position="134"/>
    </location>
</feature>
<feature type="sequence conflict" description="In Ref. 3; CAB45705." evidence="10" ref="3">
    <original>Q</original>
    <variation>L</variation>
    <location>
        <position position="146"/>
    </location>
</feature>
<feature type="helix" evidence="14">
    <location>
        <begin position="13"/>
        <end position="18"/>
    </location>
</feature>
<feature type="strand" evidence="14">
    <location>
        <begin position="21"/>
        <end position="24"/>
    </location>
</feature>
<feature type="helix" evidence="14">
    <location>
        <begin position="26"/>
        <end position="28"/>
    </location>
</feature>
<feature type="strand" evidence="14">
    <location>
        <begin position="29"/>
        <end position="34"/>
    </location>
</feature>
<feature type="helix" evidence="14">
    <location>
        <begin position="43"/>
        <end position="46"/>
    </location>
</feature>
<feature type="strand" evidence="17">
    <location>
        <begin position="50"/>
        <end position="52"/>
    </location>
</feature>
<feature type="strand" evidence="14">
    <location>
        <begin position="58"/>
        <end position="74"/>
    </location>
</feature>
<feature type="strand" evidence="14">
    <location>
        <begin position="76"/>
        <end position="82"/>
    </location>
</feature>
<feature type="helix" evidence="14">
    <location>
        <begin position="83"/>
        <end position="86"/>
    </location>
</feature>
<feature type="helix" evidence="14">
    <location>
        <begin position="87"/>
        <end position="89"/>
    </location>
</feature>
<feature type="strand" evidence="14">
    <location>
        <begin position="90"/>
        <end position="101"/>
    </location>
</feature>
<feature type="helix" evidence="16">
    <location>
        <begin position="102"/>
        <end position="104"/>
    </location>
</feature>
<feature type="strand" evidence="14">
    <location>
        <begin position="106"/>
        <end position="112"/>
    </location>
</feature>
<feature type="strand" evidence="14">
    <location>
        <begin position="117"/>
        <end position="123"/>
    </location>
</feature>
<feature type="strand" evidence="14">
    <location>
        <begin position="129"/>
        <end position="144"/>
    </location>
</feature>
<feature type="helix" evidence="14">
    <location>
        <begin position="145"/>
        <end position="147"/>
    </location>
</feature>
<feature type="strand" evidence="18">
    <location>
        <begin position="148"/>
        <end position="150"/>
    </location>
</feature>
<feature type="strand" evidence="14">
    <location>
        <begin position="155"/>
        <end position="161"/>
    </location>
</feature>
<feature type="strand" evidence="15">
    <location>
        <begin position="166"/>
        <end position="170"/>
    </location>
</feature>
<feature type="helix" evidence="18">
    <location>
        <begin position="176"/>
        <end position="179"/>
    </location>
</feature>
<dbReference type="EMBL" id="AF132794">
    <property type="protein sequence ID" value="AAD30527.1"/>
    <property type="molecule type" value="mRNA"/>
</dbReference>
<dbReference type="EMBL" id="AB012109">
    <property type="protein sequence ID" value="BAA86953.1"/>
    <property type="molecule type" value="mRNA"/>
</dbReference>
<dbReference type="EMBL" id="AL080090">
    <property type="protein sequence ID" value="CAB45705.1"/>
    <property type="molecule type" value="mRNA"/>
</dbReference>
<dbReference type="EMBL" id="DQ304649">
    <property type="protein sequence ID" value="ABB96248.1"/>
    <property type="molecule type" value="Genomic_DNA"/>
</dbReference>
<dbReference type="EMBL" id="CH471056">
    <property type="protein sequence ID" value="EAX05050.1"/>
    <property type="molecule type" value="Genomic_DNA"/>
</dbReference>
<dbReference type="EMBL" id="CH471056">
    <property type="protein sequence ID" value="EAX05051.1"/>
    <property type="molecule type" value="Genomic_DNA"/>
</dbReference>
<dbReference type="EMBL" id="BC005217">
    <property type="protein sequence ID" value="AAH05217.1"/>
    <property type="molecule type" value="mRNA"/>
</dbReference>
<dbReference type="CCDS" id="CCDS43273.1"/>
<dbReference type="PIR" id="T12476">
    <property type="entry name" value="T12476"/>
</dbReference>
<dbReference type="RefSeq" id="NP_001243635.1">
    <property type="nucleotide sequence ID" value="NM_001256706.2"/>
</dbReference>
<dbReference type="RefSeq" id="NP_001243636.1">
    <property type="nucleotide sequence ID" value="NM_001256707.2"/>
</dbReference>
<dbReference type="RefSeq" id="NP_001243637.1">
    <property type="nucleotide sequence ID" value="NM_001256708.2"/>
</dbReference>
<dbReference type="RefSeq" id="NP_001243638.1">
    <property type="nucleotide sequence ID" value="NM_001256709.1"/>
</dbReference>
<dbReference type="RefSeq" id="NP_001243639.1">
    <property type="nucleotide sequence ID" value="NM_001256710.1"/>
</dbReference>
<dbReference type="RefSeq" id="NP_001305296.1">
    <property type="nucleotide sequence ID" value="NM_001318367.1"/>
</dbReference>
<dbReference type="RefSeq" id="NP_055700.2">
    <property type="nucleotide sequence ID" value="NM_014885.5"/>
</dbReference>
<dbReference type="RefSeq" id="XP_011529826.1">
    <property type="nucleotide sequence ID" value="XM_011531524.2"/>
</dbReference>
<dbReference type="PDB" id="1JHJ">
    <property type="method" value="X-ray"/>
    <property type="resolution" value="1.60 A"/>
    <property type="chains" value="A=2-172"/>
</dbReference>
<dbReference type="PDB" id="4UI9">
    <property type="method" value="EM"/>
    <property type="resolution" value="3.60 A"/>
    <property type="chains" value="L=2-185"/>
</dbReference>
<dbReference type="PDB" id="5A31">
    <property type="method" value="EM"/>
    <property type="resolution" value="4.30 A"/>
    <property type="chains" value="L=1-185"/>
</dbReference>
<dbReference type="PDB" id="5G04">
    <property type="method" value="EM"/>
    <property type="resolution" value="4.00 A"/>
    <property type="chains" value="L=1-185"/>
</dbReference>
<dbReference type="PDB" id="5G05">
    <property type="method" value="EM"/>
    <property type="resolution" value="3.40 A"/>
    <property type="chains" value="L=1-185"/>
</dbReference>
<dbReference type="PDB" id="5KHR">
    <property type="method" value="EM"/>
    <property type="resolution" value="6.10 A"/>
    <property type="chains" value="L=1-185"/>
</dbReference>
<dbReference type="PDB" id="5KHU">
    <property type="method" value="EM"/>
    <property type="resolution" value="4.80 A"/>
    <property type="chains" value="L=1-185"/>
</dbReference>
<dbReference type="PDB" id="5L9T">
    <property type="method" value="EM"/>
    <property type="resolution" value="6.40 A"/>
    <property type="chains" value="L=1-185"/>
</dbReference>
<dbReference type="PDB" id="5L9U">
    <property type="method" value="EM"/>
    <property type="resolution" value="6.40 A"/>
    <property type="chains" value="L=1-185"/>
</dbReference>
<dbReference type="PDB" id="5LCW">
    <property type="method" value="EM"/>
    <property type="resolution" value="4.00 A"/>
    <property type="chains" value="L=1-185"/>
</dbReference>
<dbReference type="PDB" id="6Q6G">
    <property type="method" value="EM"/>
    <property type="resolution" value="3.20 A"/>
    <property type="chains" value="L=1-185"/>
</dbReference>
<dbReference type="PDB" id="6Q6H">
    <property type="method" value="EM"/>
    <property type="resolution" value="3.20 A"/>
    <property type="chains" value="L=1-185"/>
</dbReference>
<dbReference type="PDB" id="6TLJ">
    <property type="method" value="EM"/>
    <property type="resolution" value="3.80 A"/>
    <property type="chains" value="L=1-185"/>
</dbReference>
<dbReference type="PDB" id="6TM5">
    <property type="method" value="EM"/>
    <property type="resolution" value="3.90 A"/>
    <property type="chains" value="L=1-185"/>
</dbReference>
<dbReference type="PDB" id="6TNT">
    <property type="method" value="EM"/>
    <property type="resolution" value="3.78 A"/>
    <property type="chains" value="L=1-185"/>
</dbReference>
<dbReference type="PDB" id="8PKP">
    <property type="method" value="EM"/>
    <property type="resolution" value="3.20 A"/>
    <property type="chains" value="L=1-185"/>
</dbReference>
<dbReference type="PDB" id="8TAR">
    <property type="method" value="EM"/>
    <property type="resolution" value="4.00 A"/>
    <property type="chains" value="L=1-185"/>
</dbReference>
<dbReference type="PDB" id="8TAU">
    <property type="method" value="EM"/>
    <property type="resolution" value="3.50 A"/>
    <property type="chains" value="L=1-185"/>
</dbReference>
<dbReference type="PDB" id="9GAW">
    <property type="method" value="EM"/>
    <property type="resolution" value="2.90 A"/>
    <property type="chains" value="L=1-185"/>
</dbReference>
<dbReference type="PDBsum" id="1JHJ"/>
<dbReference type="PDBsum" id="4UI9"/>
<dbReference type="PDBsum" id="5A31"/>
<dbReference type="PDBsum" id="5G04"/>
<dbReference type="PDBsum" id="5G05"/>
<dbReference type="PDBsum" id="5KHR"/>
<dbReference type="PDBsum" id="5KHU"/>
<dbReference type="PDBsum" id="5L9T"/>
<dbReference type="PDBsum" id="5L9U"/>
<dbReference type="PDBsum" id="5LCW"/>
<dbReference type="PDBsum" id="6Q6G"/>
<dbReference type="PDBsum" id="6Q6H"/>
<dbReference type="PDBsum" id="6TLJ"/>
<dbReference type="PDBsum" id="6TM5"/>
<dbReference type="PDBsum" id="6TNT"/>
<dbReference type="PDBsum" id="8PKP"/>
<dbReference type="PDBsum" id="8TAR"/>
<dbReference type="PDBsum" id="8TAU"/>
<dbReference type="PDBsum" id="9GAW"/>
<dbReference type="EMDB" id="EMD-10516"/>
<dbReference type="EMDB" id="EMD-10518"/>
<dbReference type="EMDB" id="EMD-10536"/>
<dbReference type="EMDB" id="EMD-13931"/>
<dbReference type="EMDB" id="EMD-17751"/>
<dbReference type="EMDB" id="EMD-19711"/>
<dbReference type="EMDB" id="EMD-2924"/>
<dbReference type="EMDB" id="EMD-2925"/>
<dbReference type="EMDB" id="EMD-3385"/>
<dbReference type="EMDB" id="EMD-3386"/>
<dbReference type="EMDB" id="EMD-3387"/>
<dbReference type="EMDB" id="EMD-3388"/>
<dbReference type="EMDB" id="EMD-3389"/>
<dbReference type="EMDB" id="EMD-3390"/>
<dbReference type="EMDB" id="EMD-4037"/>
<dbReference type="EMDB" id="EMD-41140"/>
<dbReference type="EMDB" id="EMD-41142"/>
<dbReference type="EMDB" id="EMD-4465"/>
<dbReference type="EMDB" id="EMD-4466"/>
<dbReference type="EMDB" id="EMD-4467"/>
<dbReference type="EMDB" id="EMD-51190"/>
<dbReference type="SMR" id="Q9UM13"/>
<dbReference type="BioGRID" id="115665">
    <property type="interactions" value="80"/>
</dbReference>
<dbReference type="ComplexPortal" id="CPX-1860">
    <property type="entry name" value="Anaphase-promoting core complex"/>
</dbReference>
<dbReference type="CORUM" id="Q9UM13"/>
<dbReference type="DIP" id="DIP-39885N"/>
<dbReference type="ELM" id="Q9UM13"/>
<dbReference type="FunCoup" id="Q9UM13">
    <property type="interactions" value="3188"/>
</dbReference>
<dbReference type="IntAct" id="Q9UM13">
    <property type="interactions" value="40"/>
</dbReference>
<dbReference type="MINT" id="Q9UM13"/>
<dbReference type="STRING" id="9606.ENSP00000478501"/>
<dbReference type="GlyGen" id="Q9UM13">
    <property type="glycosylation" value="1 site, 1 O-linked glycan (1 site)"/>
</dbReference>
<dbReference type="iPTMnet" id="Q9UM13"/>
<dbReference type="PhosphoSitePlus" id="Q9UM13"/>
<dbReference type="BioMuta" id="ANAPC10"/>
<dbReference type="DMDM" id="34395509"/>
<dbReference type="jPOST" id="Q9UM13"/>
<dbReference type="MassIVE" id="Q9UM13"/>
<dbReference type="PaxDb" id="9606-ENSP00000478501"/>
<dbReference type="PeptideAtlas" id="Q9UM13"/>
<dbReference type="ProteomicsDB" id="85170"/>
<dbReference type="Pumba" id="Q9UM13"/>
<dbReference type="Antibodypedia" id="7474">
    <property type="antibodies" value="231 antibodies from 31 providers"/>
</dbReference>
<dbReference type="DNASU" id="10393"/>
<dbReference type="Ensembl" id="ENST00000309439.9">
    <property type="protein sequence ID" value="ENSP00000310071.5"/>
    <property type="gene ID" value="ENSG00000164162.14"/>
</dbReference>
<dbReference type="Ensembl" id="ENST00000451299.6">
    <property type="protein sequence ID" value="ENSP00000403891.2"/>
    <property type="gene ID" value="ENSG00000164162.14"/>
</dbReference>
<dbReference type="Ensembl" id="ENST00000507656.6">
    <property type="protein sequence ID" value="ENSP00000423995.1"/>
    <property type="gene ID" value="ENSG00000164162.14"/>
</dbReference>
<dbReference type="Ensembl" id="ENST00000613466.4">
    <property type="protein sequence ID" value="ENSP00000478501.1"/>
    <property type="gene ID" value="ENSG00000164162.14"/>
</dbReference>
<dbReference type="GeneID" id="10393"/>
<dbReference type="KEGG" id="hsa:10393"/>
<dbReference type="MANE-Select" id="ENST00000507656.6">
    <property type="protein sequence ID" value="ENSP00000423995.1"/>
    <property type="RefSeq nucleotide sequence ID" value="NM_001256706.2"/>
    <property type="RefSeq protein sequence ID" value="NP_001243635.1"/>
</dbReference>
<dbReference type="UCSC" id="uc003iju.6">
    <property type="organism name" value="human"/>
</dbReference>
<dbReference type="AGR" id="HGNC:24077"/>
<dbReference type="CTD" id="10393"/>
<dbReference type="DisGeNET" id="10393"/>
<dbReference type="GeneCards" id="ANAPC10"/>
<dbReference type="HGNC" id="HGNC:24077">
    <property type="gene designation" value="ANAPC10"/>
</dbReference>
<dbReference type="HPA" id="ENSG00000164162">
    <property type="expression patterns" value="Low tissue specificity"/>
</dbReference>
<dbReference type="MIM" id="613745">
    <property type="type" value="gene"/>
</dbReference>
<dbReference type="neXtProt" id="NX_Q9UM13"/>
<dbReference type="OpenTargets" id="ENSG00000164162"/>
<dbReference type="PharmGKB" id="PA134938672"/>
<dbReference type="VEuPathDB" id="HostDB:ENSG00000164162"/>
<dbReference type="eggNOG" id="KOG3437">
    <property type="taxonomic scope" value="Eukaryota"/>
</dbReference>
<dbReference type="GeneTree" id="ENSGT00390000013722"/>
<dbReference type="InParanoid" id="Q9UM13"/>
<dbReference type="OMA" id="FITIEFP"/>
<dbReference type="PAN-GO" id="Q9UM13">
    <property type="GO annotations" value="2 GO annotations based on evolutionary models"/>
</dbReference>
<dbReference type="PhylomeDB" id="Q9UM13"/>
<dbReference type="TreeFam" id="TF105446"/>
<dbReference type="PathwayCommons" id="Q9UM13"/>
<dbReference type="Reactome" id="R-HSA-141430">
    <property type="pathway name" value="Inactivation of APC/C via direct inhibition of the APC/C complex"/>
</dbReference>
<dbReference type="Reactome" id="R-HSA-174048">
    <property type="pathway name" value="APC/C:Cdc20 mediated degradation of Cyclin B"/>
</dbReference>
<dbReference type="Reactome" id="R-HSA-174084">
    <property type="pathway name" value="Autodegradation of Cdh1 by Cdh1:APC/C"/>
</dbReference>
<dbReference type="Reactome" id="R-HSA-174154">
    <property type="pathway name" value="APC/C:Cdc20 mediated degradation of Securin"/>
</dbReference>
<dbReference type="Reactome" id="R-HSA-174178">
    <property type="pathway name" value="APC/C:Cdh1 mediated degradation of Cdc20 and other APC/C:Cdh1 targeted proteins in late mitosis/early G1"/>
</dbReference>
<dbReference type="Reactome" id="R-HSA-174184">
    <property type="pathway name" value="Cdc20:Phospho-APC/C mediated degradation of Cyclin A"/>
</dbReference>
<dbReference type="Reactome" id="R-HSA-176407">
    <property type="pathway name" value="Conversion from APC/C:Cdc20 to APC/C:Cdh1 in late anaphase"/>
</dbReference>
<dbReference type="Reactome" id="R-HSA-176408">
    <property type="pathway name" value="Regulation of APC/C activators between G1/S and early anaphase"/>
</dbReference>
<dbReference type="Reactome" id="R-HSA-176409">
    <property type="pathway name" value="APC/C:Cdc20 mediated degradation of mitotic proteins"/>
</dbReference>
<dbReference type="Reactome" id="R-HSA-176412">
    <property type="pathway name" value="Phosphorylation of the APC/C"/>
</dbReference>
<dbReference type="Reactome" id="R-HSA-179409">
    <property type="pathway name" value="APC-Cdc20 mediated degradation of Nek2A"/>
</dbReference>
<dbReference type="Reactome" id="R-HSA-2467813">
    <property type="pathway name" value="Separation of Sister Chromatids"/>
</dbReference>
<dbReference type="Reactome" id="R-HSA-2559582">
    <property type="pathway name" value="Senescence-Associated Secretory Phenotype (SASP)"/>
</dbReference>
<dbReference type="Reactome" id="R-HSA-68867">
    <property type="pathway name" value="Assembly of the pre-replicative complex"/>
</dbReference>
<dbReference type="Reactome" id="R-HSA-69017">
    <property type="pathway name" value="CDK-mediated phosphorylation and removal of Cdc6"/>
</dbReference>
<dbReference type="Reactome" id="R-HSA-8853884">
    <property type="pathway name" value="Transcriptional Regulation by VENTX"/>
</dbReference>
<dbReference type="Reactome" id="R-HSA-9687136">
    <property type="pathway name" value="Aberrant regulation of mitotic exit in cancer due to RB1 defects"/>
</dbReference>
<dbReference type="Reactome" id="R-HSA-983168">
    <property type="pathway name" value="Antigen processing: Ubiquitination &amp; Proteasome degradation"/>
</dbReference>
<dbReference type="SignaLink" id="Q9UM13"/>
<dbReference type="SIGNOR" id="Q9UM13"/>
<dbReference type="UniPathway" id="UPA00143"/>
<dbReference type="BioGRID-ORCS" id="10393">
    <property type="hits" value="636 hits in 1168 CRISPR screens"/>
</dbReference>
<dbReference type="CD-CODE" id="8C2F96ED">
    <property type="entry name" value="Centrosome"/>
</dbReference>
<dbReference type="ChiTaRS" id="ANAPC10">
    <property type="organism name" value="human"/>
</dbReference>
<dbReference type="EvolutionaryTrace" id="Q9UM13"/>
<dbReference type="GeneWiki" id="ANAPC10"/>
<dbReference type="GenomeRNAi" id="10393"/>
<dbReference type="Pharos" id="Q9UM13">
    <property type="development level" value="Tbio"/>
</dbReference>
<dbReference type="PRO" id="PR:Q9UM13"/>
<dbReference type="Proteomes" id="UP000005640">
    <property type="component" value="Chromosome 4"/>
</dbReference>
<dbReference type="RNAct" id="Q9UM13">
    <property type="molecule type" value="protein"/>
</dbReference>
<dbReference type="Bgee" id="ENSG00000164162">
    <property type="expression patterns" value="Expressed in oocyte and 198 other cell types or tissues"/>
</dbReference>
<dbReference type="ExpressionAtlas" id="Q9UM13">
    <property type="expression patterns" value="baseline and differential"/>
</dbReference>
<dbReference type="GO" id="GO:0005680">
    <property type="term" value="C:anaphase-promoting complex"/>
    <property type="evidence" value="ECO:0000314"/>
    <property type="project" value="UniProtKB"/>
</dbReference>
<dbReference type="GO" id="GO:0005829">
    <property type="term" value="C:cytosol"/>
    <property type="evidence" value="ECO:0000304"/>
    <property type="project" value="Reactome"/>
</dbReference>
<dbReference type="GO" id="GO:0005654">
    <property type="term" value="C:nucleoplasm"/>
    <property type="evidence" value="ECO:0000304"/>
    <property type="project" value="Reactome"/>
</dbReference>
<dbReference type="GO" id="GO:0031145">
    <property type="term" value="P:anaphase-promoting complex-dependent catabolic process"/>
    <property type="evidence" value="ECO:0000314"/>
    <property type="project" value="UniProtKB"/>
</dbReference>
<dbReference type="GO" id="GO:0051301">
    <property type="term" value="P:cell division"/>
    <property type="evidence" value="ECO:0007669"/>
    <property type="project" value="UniProtKB-KW"/>
</dbReference>
<dbReference type="GO" id="GO:0141198">
    <property type="term" value="P:protein branched polyubiquitination"/>
    <property type="evidence" value="ECO:0000314"/>
    <property type="project" value="UniProtKB"/>
</dbReference>
<dbReference type="GO" id="GO:0070979">
    <property type="term" value="P:protein K11-linked ubiquitination"/>
    <property type="evidence" value="ECO:0000314"/>
    <property type="project" value="UniProtKB"/>
</dbReference>
<dbReference type="GO" id="GO:0070936">
    <property type="term" value="P:protein K48-linked ubiquitination"/>
    <property type="evidence" value="ECO:0000314"/>
    <property type="project" value="UniProtKB"/>
</dbReference>
<dbReference type="GO" id="GO:0051445">
    <property type="term" value="P:regulation of meiotic cell cycle"/>
    <property type="evidence" value="ECO:0000303"/>
    <property type="project" value="ComplexPortal"/>
</dbReference>
<dbReference type="GO" id="GO:0007346">
    <property type="term" value="P:regulation of mitotic cell cycle"/>
    <property type="evidence" value="ECO:0000303"/>
    <property type="project" value="ComplexPortal"/>
</dbReference>
<dbReference type="CDD" id="cd08366">
    <property type="entry name" value="APC10"/>
    <property type="match status" value="1"/>
</dbReference>
<dbReference type="FunFam" id="2.60.120.260:FF:000019">
    <property type="entry name" value="Anaphase-promoting complex subunit 10"/>
    <property type="match status" value="1"/>
</dbReference>
<dbReference type="Gene3D" id="2.60.120.260">
    <property type="entry name" value="Galactose-binding domain-like"/>
    <property type="match status" value="1"/>
</dbReference>
<dbReference type="InterPro" id="IPR016901">
    <property type="entry name" value="APC10/Doc1"/>
</dbReference>
<dbReference type="InterPro" id="IPR004939">
    <property type="entry name" value="APC_su10/DOC_dom"/>
</dbReference>
<dbReference type="InterPro" id="IPR008979">
    <property type="entry name" value="Galactose-bd-like_sf"/>
</dbReference>
<dbReference type="PANTHER" id="PTHR12936">
    <property type="entry name" value="ANAPHASE-PROMOTING COMPLEX 10"/>
    <property type="match status" value="1"/>
</dbReference>
<dbReference type="PANTHER" id="PTHR12936:SF0">
    <property type="entry name" value="ANAPHASE-PROMOTING COMPLEX SUBUNIT 10"/>
    <property type="match status" value="1"/>
</dbReference>
<dbReference type="Pfam" id="PF03256">
    <property type="entry name" value="ANAPC10"/>
    <property type="match status" value="1"/>
</dbReference>
<dbReference type="PIRSF" id="PIRSF028841">
    <property type="entry name" value="APC10_sub"/>
    <property type="match status" value="1"/>
</dbReference>
<dbReference type="SMART" id="SM01337">
    <property type="entry name" value="APC10"/>
    <property type="match status" value="1"/>
</dbReference>
<dbReference type="SUPFAM" id="SSF49785">
    <property type="entry name" value="Galactose-binding domain-like"/>
    <property type="match status" value="1"/>
</dbReference>
<dbReference type="PROSITE" id="PS51284">
    <property type="entry name" value="DOC"/>
    <property type="match status" value="1"/>
</dbReference>